<feature type="chain" id="PRO_0000365896" description="ATP synthase subunit c">
    <location>
        <begin position="1"/>
        <end position="90"/>
    </location>
</feature>
<feature type="transmembrane region" description="Helical" evidence="1">
    <location>
        <begin position="17"/>
        <end position="37"/>
    </location>
</feature>
<feature type="transmembrane region" description="Helical" evidence="1">
    <location>
        <begin position="70"/>
        <end position="90"/>
    </location>
</feature>
<feature type="site" description="Reversibly protonated during proton transport" evidence="1">
    <location>
        <position position="74"/>
    </location>
</feature>
<keyword id="KW-0066">ATP synthesis</keyword>
<keyword id="KW-1003">Cell membrane</keyword>
<keyword id="KW-0138">CF(0)</keyword>
<keyword id="KW-0375">Hydrogen ion transport</keyword>
<keyword id="KW-0406">Ion transport</keyword>
<keyword id="KW-0446">Lipid-binding</keyword>
<keyword id="KW-0472">Membrane</keyword>
<keyword id="KW-1185">Reference proteome</keyword>
<keyword id="KW-0812">Transmembrane</keyword>
<keyword id="KW-1133">Transmembrane helix</keyword>
<keyword id="KW-0813">Transport</keyword>
<accession>B3PLV3</accession>
<organism>
    <name type="scientific">Metamycoplasma arthritidis (strain 158L3-1)</name>
    <name type="common">Mycoplasma arthritidis</name>
    <dbReference type="NCBI Taxonomy" id="243272"/>
    <lineage>
        <taxon>Bacteria</taxon>
        <taxon>Bacillati</taxon>
        <taxon>Mycoplasmatota</taxon>
        <taxon>Mycoplasmoidales</taxon>
        <taxon>Metamycoplasmataceae</taxon>
        <taxon>Metamycoplasma</taxon>
    </lineage>
</organism>
<gene>
    <name evidence="1" type="primary">atpE</name>
    <name type="ordered locus">MARTH_orf042</name>
</gene>
<sequence>METIVNGFNQPNAQASPLAYGLTMVAAGLAIMGAGVVSVGQGMAVAKAVEAIGRNPEATSKIRSTLIMGLAIVETASIYCFIIALLIIFV</sequence>
<reference key="1">
    <citation type="journal article" date="2008" name="Infect. Immun.">
        <title>Genome of Mycoplasma arthritidis.</title>
        <authorList>
            <person name="Dybvig K."/>
            <person name="Zuhua C."/>
            <person name="Lao P."/>
            <person name="Jordan D.S."/>
            <person name="French C.T."/>
            <person name="Tu A.H."/>
            <person name="Loraine A.E."/>
        </authorList>
    </citation>
    <scope>NUCLEOTIDE SEQUENCE [LARGE SCALE GENOMIC DNA]</scope>
    <source>
        <strain>158L3-1</strain>
    </source>
</reference>
<evidence type="ECO:0000255" key="1">
    <source>
        <dbReference type="HAMAP-Rule" id="MF_01396"/>
    </source>
</evidence>
<protein>
    <recommendedName>
        <fullName evidence="1">ATP synthase subunit c</fullName>
    </recommendedName>
    <alternativeName>
        <fullName evidence="1">ATP synthase F(0) sector subunit c</fullName>
    </alternativeName>
    <alternativeName>
        <fullName evidence="1">F-type ATPase subunit c</fullName>
        <shortName evidence="1">F-ATPase subunit c</shortName>
    </alternativeName>
    <alternativeName>
        <fullName evidence="1">Lipid-binding protein</fullName>
    </alternativeName>
</protein>
<dbReference type="EMBL" id="CP001047">
    <property type="protein sequence ID" value="ACF07005.1"/>
    <property type="molecule type" value="Genomic_DNA"/>
</dbReference>
<dbReference type="RefSeq" id="WP_012497962.1">
    <property type="nucleotide sequence ID" value="NC_011025.1"/>
</dbReference>
<dbReference type="SMR" id="B3PLV3"/>
<dbReference type="STRING" id="243272.MARTH_orf042"/>
<dbReference type="KEGG" id="mat:MARTH_orf042"/>
<dbReference type="eggNOG" id="COG0636">
    <property type="taxonomic scope" value="Bacteria"/>
</dbReference>
<dbReference type="HOGENOM" id="CLU_148047_2_0_14"/>
<dbReference type="Proteomes" id="UP000008812">
    <property type="component" value="Chromosome"/>
</dbReference>
<dbReference type="GO" id="GO:0005886">
    <property type="term" value="C:plasma membrane"/>
    <property type="evidence" value="ECO:0007669"/>
    <property type="project" value="UniProtKB-SubCell"/>
</dbReference>
<dbReference type="GO" id="GO:0045259">
    <property type="term" value="C:proton-transporting ATP synthase complex"/>
    <property type="evidence" value="ECO:0007669"/>
    <property type="project" value="UniProtKB-KW"/>
</dbReference>
<dbReference type="GO" id="GO:0033177">
    <property type="term" value="C:proton-transporting two-sector ATPase complex, proton-transporting domain"/>
    <property type="evidence" value="ECO:0007669"/>
    <property type="project" value="InterPro"/>
</dbReference>
<dbReference type="GO" id="GO:0008289">
    <property type="term" value="F:lipid binding"/>
    <property type="evidence" value="ECO:0007669"/>
    <property type="project" value="UniProtKB-KW"/>
</dbReference>
<dbReference type="GO" id="GO:0046933">
    <property type="term" value="F:proton-transporting ATP synthase activity, rotational mechanism"/>
    <property type="evidence" value="ECO:0007669"/>
    <property type="project" value="UniProtKB-UniRule"/>
</dbReference>
<dbReference type="CDD" id="cd18184">
    <property type="entry name" value="ATP-synt_Fo_c_NaATPase"/>
    <property type="match status" value="1"/>
</dbReference>
<dbReference type="Gene3D" id="1.20.120.610">
    <property type="entry name" value="lithium bound rotor ring of v- atpase"/>
    <property type="match status" value="1"/>
</dbReference>
<dbReference type="HAMAP" id="MF_01396">
    <property type="entry name" value="ATP_synth_c_bact"/>
    <property type="match status" value="1"/>
</dbReference>
<dbReference type="InterPro" id="IPR005953">
    <property type="entry name" value="ATP_synth_csu_bac/chlpt"/>
</dbReference>
<dbReference type="InterPro" id="IPR000454">
    <property type="entry name" value="ATP_synth_F0_csu"/>
</dbReference>
<dbReference type="InterPro" id="IPR020537">
    <property type="entry name" value="ATP_synth_F0_csu_DDCD_BS"/>
</dbReference>
<dbReference type="InterPro" id="IPR002379">
    <property type="entry name" value="ATPase_proteolipid_c-like_dom"/>
</dbReference>
<dbReference type="InterPro" id="IPR035921">
    <property type="entry name" value="F/V-ATP_Csub_sf"/>
</dbReference>
<dbReference type="NCBIfam" id="TIGR01260">
    <property type="entry name" value="ATP_synt_c"/>
    <property type="match status" value="1"/>
</dbReference>
<dbReference type="Pfam" id="PF00137">
    <property type="entry name" value="ATP-synt_C"/>
    <property type="match status" value="1"/>
</dbReference>
<dbReference type="PRINTS" id="PR00124">
    <property type="entry name" value="ATPASEC"/>
</dbReference>
<dbReference type="SUPFAM" id="SSF81333">
    <property type="entry name" value="F1F0 ATP synthase subunit C"/>
    <property type="match status" value="1"/>
</dbReference>
<dbReference type="PROSITE" id="PS00605">
    <property type="entry name" value="ATPASE_C"/>
    <property type="match status" value="1"/>
</dbReference>
<name>ATPL_META1</name>
<comment type="function">
    <text evidence="1">F(1)F(0) ATP synthase produces ATP from ADP in the presence of a proton or sodium gradient. F-type ATPases consist of two structural domains, F(1) containing the extramembraneous catalytic core and F(0) containing the membrane proton channel, linked together by a central stalk and a peripheral stalk. During catalysis, ATP synthesis in the catalytic domain of F(1) is coupled via a rotary mechanism of the central stalk subunits to proton translocation.</text>
</comment>
<comment type="function">
    <text evidence="1">Key component of the F(0) channel; it plays a direct role in translocation across the membrane. A homomeric c-ring of between 10-14 subunits forms the central stalk rotor element with the F(1) delta and epsilon subunits.</text>
</comment>
<comment type="subunit">
    <text evidence="1">F-type ATPases have 2 components, F(1) - the catalytic core - and F(0) - the membrane proton channel. F(1) has five subunits: alpha(3), beta(3), gamma(1), delta(1), epsilon(1). F(0) has three main subunits: a(1), b(2) and c(10-14). The alpha and beta chains form an alternating ring which encloses part of the gamma chain. F(1) is attached to F(0) by a central stalk formed by the gamma and epsilon chains, while a peripheral stalk is formed by the delta and b chains.</text>
</comment>
<comment type="subcellular location">
    <subcellularLocation>
        <location evidence="1">Cell membrane</location>
        <topology evidence="1">Multi-pass membrane protein</topology>
    </subcellularLocation>
</comment>
<comment type="similarity">
    <text evidence="1">Belongs to the ATPase C chain family.</text>
</comment>
<proteinExistence type="inferred from homology"/>